<dbReference type="EMBL" id="CP000918">
    <property type="protein sequence ID" value="ACO17815.1"/>
    <property type="molecule type" value="Genomic_DNA"/>
</dbReference>
<dbReference type="RefSeq" id="WP_000268761.1">
    <property type="nucleotide sequence ID" value="NC_012468.1"/>
</dbReference>
<dbReference type="SMR" id="C1C6B6"/>
<dbReference type="GeneID" id="45653854"/>
<dbReference type="KEGG" id="snm:SP70585_0817"/>
<dbReference type="HOGENOM" id="CLU_100590_5_0_9"/>
<dbReference type="Proteomes" id="UP000002211">
    <property type="component" value="Chromosome"/>
</dbReference>
<dbReference type="GO" id="GO:0005737">
    <property type="term" value="C:cytoplasm"/>
    <property type="evidence" value="ECO:0007669"/>
    <property type="project" value="UniProtKB-ARBA"/>
</dbReference>
<dbReference type="GO" id="GO:0015935">
    <property type="term" value="C:small ribosomal subunit"/>
    <property type="evidence" value="ECO:0007669"/>
    <property type="project" value="TreeGrafter"/>
</dbReference>
<dbReference type="GO" id="GO:0003735">
    <property type="term" value="F:structural constituent of ribosome"/>
    <property type="evidence" value="ECO:0007669"/>
    <property type="project" value="InterPro"/>
</dbReference>
<dbReference type="GO" id="GO:0006412">
    <property type="term" value="P:translation"/>
    <property type="evidence" value="ECO:0007669"/>
    <property type="project" value="UniProtKB-UniRule"/>
</dbReference>
<dbReference type="FunFam" id="3.30.1320.10:FF:000002">
    <property type="entry name" value="30S ribosomal protein S16"/>
    <property type="match status" value="1"/>
</dbReference>
<dbReference type="Gene3D" id="3.30.1320.10">
    <property type="match status" value="1"/>
</dbReference>
<dbReference type="HAMAP" id="MF_00385">
    <property type="entry name" value="Ribosomal_bS16"/>
    <property type="match status" value="1"/>
</dbReference>
<dbReference type="InterPro" id="IPR000307">
    <property type="entry name" value="Ribosomal_bS16"/>
</dbReference>
<dbReference type="InterPro" id="IPR023803">
    <property type="entry name" value="Ribosomal_bS16_dom_sf"/>
</dbReference>
<dbReference type="NCBIfam" id="TIGR00002">
    <property type="entry name" value="S16"/>
    <property type="match status" value="1"/>
</dbReference>
<dbReference type="PANTHER" id="PTHR12919">
    <property type="entry name" value="30S RIBOSOMAL PROTEIN S16"/>
    <property type="match status" value="1"/>
</dbReference>
<dbReference type="PANTHER" id="PTHR12919:SF20">
    <property type="entry name" value="SMALL RIBOSOMAL SUBUNIT PROTEIN BS16M"/>
    <property type="match status" value="1"/>
</dbReference>
<dbReference type="Pfam" id="PF00886">
    <property type="entry name" value="Ribosomal_S16"/>
    <property type="match status" value="1"/>
</dbReference>
<dbReference type="SUPFAM" id="SSF54565">
    <property type="entry name" value="Ribosomal protein S16"/>
    <property type="match status" value="1"/>
</dbReference>
<accession>C1C6B6</accession>
<organism>
    <name type="scientific">Streptococcus pneumoniae (strain 70585)</name>
    <dbReference type="NCBI Taxonomy" id="488221"/>
    <lineage>
        <taxon>Bacteria</taxon>
        <taxon>Bacillati</taxon>
        <taxon>Bacillota</taxon>
        <taxon>Bacilli</taxon>
        <taxon>Lactobacillales</taxon>
        <taxon>Streptococcaceae</taxon>
        <taxon>Streptococcus</taxon>
    </lineage>
</organism>
<name>RS16_STRP7</name>
<reference key="1">
    <citation type="journal article" date="2010" name="Genome Biol.">
        <title>Structure and dynamics of the pan-genome of Streptococcus pneumoniae and closely related species.</title>
        <authorList>
            <person name="Donati C."/>
            <person name="Hiller N.L."/>
            <person name="Tettelin H."/>
            <person name="Muzzi A."/>
            <person name="Croucher N.J."/>
            <person name="Angiuoli S.V."/>
            <person name="Oggioni M."/>
            <person name="Dunning Hotopp J.C."/>
            <person name="Hu F.Z."/>
            <person name="Riley D.R."/>
            <person name="Covacci A."/>
            <person name="Mitchell T.J."/>
            <person name="Bentley S.D."/>
            <person name="Kilian M."/>
            <person name="Ehrlich G.D."/>
            <person name="Rappuoli R."/>
            <person name="Moxon E.R."/>
            <person name="Masignani V."/>
        </authorList>
    </citation>
    <scope>NUCLEOTIDE SEQUENCE [LARGE SCALE GENOMIC DNA]</scope>
    <source>
        <strain>70585</strain>
    </source>
</reference>
<sequence length="90" mass="10222">MAVKIRLTRMGSKKKPFYRINVADSRSPRDGRFIETVGTYNPLVAENQVTLKEDRVLAWLANGAQPSDTVRNILSKEGVLKKFHDSKFSK</sequence>
<proteinExistence type="inferred from homology"/>
<comment type="similarity">
    <text evidence="1">Belongs to the bacterial ribosomal protein bS16 family.</text>
</comment>
<keyword id="KW-0687">Ribonucleoprotein</keyword>
<keyword id="KW-0689">Ribosomal protein</keyword>
<protein>
    <recommendedName>
        <fullName evidence="1">Small ribosomal subunit protein bS16</fullName>
    </recommendedName>
    <alternativeName>
        <fullName evidence="2">30S ribosomal protein S16</fullName>
    </alternativeName>
</protein>
<feature type="chain" id="PRO_1000134325" description="Small ribosomal subunit protein bS16">
    <location>
        <begin position="1"/>
        <end position="90"/>
    </location>
</feature>
<gene>
    <name evidence="1" type="primary">rpsP</name>
    <name type="ordered locus">SP70585_0817</name>
</gene>
<evidence type="ECO:0000255" key="1">
    <source>
        <dbReference type="HAMAP-Rule" id="MF_00385"/>
    </source>
</evidence>
<evidence type="ECO:0000305" key="2"/>